<comment type="similarity">
    <text evidence="1">Belongs to the bacterial ribosomal protein bL35 family.</text>
</comment>
<evidence type="ECO:0000255" key="1">
    <source>
        <dbReference type="HAMAP-Rule" id="MF_00514"/>
    </source>
</evidence>
<evidence type="ECO:0000305" key="2"/>
<protein>
    <recommendedName>
        <fullName evidence="1">Large ribosomal subunit protein bL35</fullName>
    </recommendedName>
    <alternativeName>
        <fullName evidence="2">50S ribosomal protein L35</fullName>
    </alternativeName>
</protein>
<proteinExistence type="inferred from homology"/>
<accession>A5V925</accession>
<feature type="chain" id="PRO_1000050771" description="Large ribosomal subunit protein bL35">
    <location>
        <begin position="1"/>
        <end position="67"/>
    </location>
</feature>
<reference key="1">
    <citation type="journal article" date="2010" name="J. Bacteriol.">
        <title>Genome sequence of the dioxin-mineralizing bacterium Sphingomonas wittichii RW1.</title>
        <authorList>
            <person name="Miller T.R."/>
            <person name="Delcher A.L."/>
            <person name="Salzberg S.L."/>
            <person name="Saunders E."/>
            <person name="Detter J.C."/>
            <person name="Halden R.U."/>
        </authorList>
    </citation>
    <scope>NUCLEOTIDE SEQUENCE [LARGE SCALE GENOMIC DNA]</scope>
    <source>
        <strain>DSM 6014 / CCUG 31198 / JCM 15750 / NBRC 105917 / EY 4224 / RW1</strain>
    </source>
</reference>
<keyword id="KW-1185">Reference proteome</keyword>
<keyword id="KW-0687">Ribonucleoprotein</keyword>
<keyword id="KW-0689">Ribosomal protein</keyword>
<sequence length="67" mass="7487">MPKLKTKSGVKKRFKLTATGKVKHGVAGKRHRLISHNSKYIRTNRGTTVLAEADTARVKLWAPYGLN</sequence>
<organism>
    <name type="scientific">Rhizorhabdus wittichii (strain DSM 6014 / CCUG 31198 / JCM 15750 / NBRC 105917 / EY 4224 / RW1)</name>
    <name type="common">Sphingomonas wittichii</name>
    <dbReference type="NCBI Taxonomy" id="392499"/>
    <lineage>
        <taxon>Bacteria</taxon>
        <taxon>Pseudomonadati</taxon>
        <taxon>Pseudomonadota</taxon>
        <taxon>Alphaproteobacteria</taxon>
        <taxon>Sphingomonadales</taxon>
        <taxon>Sphingomonadaceae</taxon>
        <taxon>Rhizorhabdus</taxon>
    </lineage>
</organism>
<dbReference type="EMBL" id="CP000699">
    <property type="protein sequence ID" value="ABQ68791.1"/>
    <property type="molecule type" value="Genomic_DNA"/>
</dbReference>
<dbReference type="SMR" id="A5V925"/>
<dbReference type="STRING" id="392499.Swit_2432"/>
<dbReference type="PaxDb" id="392499-Swit_2432"/>
<dbReference type="KEGG" id="swi:Swit_2432"/>
<dbReference type="eggNOG" id="COG0291">
    <property type="taxonomic scope" value="Bacteria"/>
</dbReference>
<dbReference type="HOGENOM" id="CLU_169643_2_1_5"/>
<dbReference type="OrthoDB" id="9804851at2"/>
<dbReference type="Proteomes" id="UP000001989">
    <property type="component" value="Chromosome"/>
</dbReference>
<dbReference type="GO" id="GO:0022625">
    <property type="term" value="C:cytosolic large ribosomal subunit"/>
    <property type="evidence" value="ECO:0007669"/>
    <property type="project" value="TreeGrafter"/>
</dbReference>
<dbReference type="GO" id="GO:0003735">
    <property type="term" value="F:structural constituent of ribosome"/>
    <property type="evidence" value="ECO:0007669"/>
    <property type="project" value="InterPro"/>
</dbReference>
<dbReference type="GO" id="GO:0006412">
    <property type="term" value="P:translation"/>
    <property type="evidence" value="ECO:0007669"/>
    <property type="project" value="UniProtKB-UniRule"/>
</dbReference>
<dbReference type="FunFam" id="4.10.410.60:FF:000001">
    <property type="entry name" value="50S ribosomal protein L35"/>
    <property type="match status" value="1"/>
</dbReference>
<dbReference type="Gene3D" id="4.10.410.60">
    <property type="match status" value="1"/>
</dbReference>
<dbReference type="HAMAP" id="MF_00514">
    <property type="entry name" value="Ribosomal_bL35"/>
    <property type="match status" value="1"/>
</dbReference>
<dbReference type="InterPro" id="IPR001706">
    <property type="entry name" value="Ribosomal_bL35"/>
</dbReference>
<dbReference type="InterPro" id="IPR021137">
    <property type="entry name" value="Ribosomal_bL35-like"/>
</dbReference>
<dbReference type="InterPro" id="IPR018265">
    <property type="entry name" value="Ribosomal_bL35_CS"/>
</dbReference>
<dbReference type="InterPro" id="IPR037229">
    <property type="entry name" value="Ribosomal_bL35_sf"/>
</dbReference>
<dbReference type="NCBIfam" id="TIGR00001">
    <property type="entry name" value="rpmI_bact"/>
    <property type="match status" value="1"/>
</dbReference>
<dbReference type="PANTHER" id="PTHR33343">
    <property type="entry name" value="54S RIBOSOMAL PROTEIN BL35M"/>
    <property type="match status" value="1"/>
</dbReference>
<dbReference type="PANTHER" id="PTHR33343:SF1">
    <property type="entry name" value="LARGE RIBOSOMAL SUBUNIT PROTEIN BL35M"/>
    <property type="match status" value="1"/>
</dbReference>
<dbReference type="Pfam" id="PF01632">
    <property type="entry name" value="Ribosomal_L35p"/>
    <property type="match status" value="1"/>
</dbReference>
<dbReference type="PRINTS" id="PR00064">
    <property type="entry name" value="RIBOSOMALL35"/>
</dbReference>
<dbReference type="SUPFAM" id="SSF143034">
    <property type="entry name" value="L35p-like"/>
    <property type="match status" value="1"/>
</dbReference>
<dbReference type="PROSITE" id="PS00936">
    <property type="entry name" value="RIBOSOMAL_L35"/>
    <property type="match status" value="1"/>
</dbReference>
<gene>
    <name evidence="1" type="primary">rpmI</name>
    <name type="ordered locus">Swit_2432</name>
</gene>
<name>RL35_RHIWR</name>